<keyword id="KW-0004">4Fe-4S</keyword>
<keyword id="KW-0028">Amino-acid biosynthesis</keyword>
<keyword id="KW-0100">Branched-chain amino acid biosynthesis</keyword>
<keyword id="KW-0408">Iron</keyword>
<keyword id="KW-0411">Iron-sulfur</keyword>
<keyword id="KW-0432">Leucine biosynthesis</keyword>
<keyword id="KW-0456">Lyase</keyword>
<keyword id="KW-0479">Metal-binding</keyword>
<comment type="function">
    <text evidence="1">Catalyzes the isomerization between 2-isopropylmalate and 3-isopropylmalate, via the formation of 2-isopropylmaleate.</text>
</comment>
<comment type="catalytic activity">
    <reaction evidence="1">
        <text>(2R,3S)-3-isopropylmalate = (2S)-2-isopropylmalate</text>
        <dbReference type="Rhea" id="RHEA:32287"/>
        <dbReference type="ChEBI" id="CHEBI:1178"/>
        <dbReference type="ChEBI" id="CHEBI:35121"/>
        <dbReference type="EC" id="4.2.1.33"/>
    </reaction>
</comment>
<comment type="cofactor">
    <cofactor evidence="1">
        <name>[4Fe-4S] cluster</name>
        <dbReference type="ChEBI" id="CHEBI:49883"/>
    </cofactor>
    <text evidence="1">Binds 1 [4Fe-4S] cluster per subunit.</text>
</comment>
<comment type="pathway">
    <text evidence="1">Amino-acid biosynthesis; L-leucine biosynthesis; L-leucine from 3-methyl-2-oxobutanoate: step 2/4.</text>
</comment>
<comment type="subunit">
    <text evidence="1">Heterodimer of LeuC and LeuD.</text>
</comment>
<comment type="similarity">
    <text evidence="1">Belongs to the aconitase/IPM isomerase family. LeuC type 1 subfamily.</text>
</comment>
<reference key="1">
    <citation type="journal article" date="2006" name="PLoS Biol.">
        <title>The genome of deep-sea vent chemolithoautotroph Thiomicrospira crunogena XCL-2.</title>
        <authorList>
            <person name="Scott K.M."/>
            <person name="Sievert S.M."/>
            <person name="Abril F.N."/>
            <person name="Ball L.A."/>
            <person name="Barrett C.J."/>
            <person name="Blake R.A."/>
            <person name="Boller A.J."/>
            <person name="Chain P.S.G."/>
            <person name="Clark J.A."/>
            <person name="Davis C.R."/>
            <person name="Detter C."/>
            <person name="Do K.F."/>
            <person name="Dobrinski K.P."/>
            <person name="Faza B.I."/>
            <person name="Fitzpatrick K.A."/>
            <person name="Freyermuth S.K."/>
            <person name="Harmer T.L."/>
            <person name="Hauser L.J."/>
            <person name="Huegler M."/>
            <person name="Kerfeld C.A."/>
            <person name="Klotz M.G."/>
            <person name="Kong W.W."/>
            <person name="Land M."/>
            <person name="Lapidus A."/>
            <person name="Larimer F.W."/>
            <person name="Longo D.L."/>
            <person name="Lucas S."/>
            <person name="Malfatti S.A."/>
            <person name="Massey S.E."/>
            <person name="Martin D.D."/>
            <person name="McCuddin Z."/>
            <person name="Meyer F."/>
            <person name="Moore J.L."/>
            <person name="Ocampo L.H. Jr."/>
            <person name="Paul J.H."/>
            <person name="Paulsen I.T."/>
            <person name="Reep D.K."/>
            <person name="Ren Q."/>
            <person name="Ross R.L."/>
            <person name="Sato P.Y."/>
            <person name="Thomas P."/>
            <person name="Tinkham L.E."/>
            <person name="Zeruth G.T."/>
        </authorList>
    </citation>
    <scope>NUCLEOTIDE SEQUENCE [LARGE SCALE GENOMIC DNA]</scope>
    <source>
        <strain>DSM 25203 / XCL-2</strain>
    </source>
</reference>
<evidence type="ECO:0000255" key="1">
    <source>
        <dbReference type="HAMAP-Rule" id="MF_01026"/>
    </source>
</evidence>
<accession>Q31HI2</accession>
<name>LEUC_HYDCU</name>
<gene>
    <name evidence="1" type="primary">leuC</name>
    <name type="ordered locus">Tcr_0795</name>
</gene>
<feature type="chain" id="PRO_1000063629" description="3-isopropylmalate dehydratase large subunit">
    <location>
        <begin position="1"/>
        <end position="474"/>
    </location>
</feature>
<feature type="binding site" evidence="1">
    <location>
        <position position="350"/>
    </location>
    <ligand>
        <name>[4Fe-4S] cluster</name>
        <dbReference type="ChEBI" id="CHEBI:49883"/>
    </ligand>
</feature>
<feature type="binding site" evidence="1">
    <location>
        <position position="411"/>
    </location>
    <ligand>
        <name>[4Fe-4S] cluster</name>
        <dbReference type="ChEBI" id="CHEBI:49883"/>
    </ligand>
</feature>
<feature type="binding site" evidence="1">
    <location>
        <position position="414"/>
    </location>
    <ligand>
        <name>[4Fe-4S] cluster</name>
        <dbReference type="ChEBI" id="CHEBI:49883"/>
    </ligand>
</feature>
<dbReference type="EC" id="4.2.1.33" evidence="1"/>
<dbReference type="EMBL" id="CP000109">
    <property type="protein sequence ID" value="ABB41391.1"/>
    <property type="molecule type" value="Genomic_DNA"/>
</dbReference>
<dbReference type="SMR" id="Q31HI2"/>
<dbReference type="STRING" id="317025.Tcr_0795"/>
<dbReference type="KEGG" id="tcx:Tcr_0795"/>
<dbReference type="eggNOG" id="COG0065">
    <property type="taxonomic scope" value="Bacteria"/>
</dbReference>
<dbReference type="HOGENOM" id="CLU_006714_3_4_6"/>
<dbReference type="OrthoDB" id="9802769at2"/>
<dbReference type="UniPathway" id="UPA00048">
    <property type="reaction ID" value="UER00071"/>
</dbReference>
<dbReference type="GO" id="GO:0003861">
    <property type="term" value="F:3-isopropylmalate dehydratase activity"/>
    <property type="evidence" value="ECO:0007669"/>
    <property type="project" value="UniProtKB-UniRule"/>
</dbReference>
<dbReference type="GO" id="GO:0051539">
    <property type="term" value="F:4 iron, 4 sulfur cluster binding"/>
    <property type="evidence" value="ECO:0007669"/>
    <property type="project" value="UniProtKB-KW"/>
</dbReference>
<dbReference type="GO" id="GO:0046872">
    <property type="term" value="F:metal ion binding"/>
    <property type="evidence" value="ECO:0007669"/>
    <property type="project" value="UniProtKB-KW"/>
</dbReference>
<dbReference type="GO" id="GO:0009098">
    <property type="term" value="P:L-leucine biosynthetic process"/>
    <property type="evidence" value="ECO:0007669"/>
    <property type="project" value="UniProtKB-UniRule"/>
</dbReference>
<dbReference type="CDD" id="cd01583">
    <property type="entry name" value="IPMI"/>
    <property type="match status" value="1"/>
</dbReference>
<dbReference type="FunFam" id="3.30.499.10:FF:000007">
    <property type="entry name" value="3-isopropylmalate dehydratase large subunit"/>
    <property type="match status" value="1"/>
</dbReference>
<dbReference type="Gene3D" id="3.30.499.10">
    <property type="entry name" value="Aconitase, domain 3"/>
    <property type="match status" value="2"/>
</dbReference>
<dbReference type="HAMAP" id="MF_01026">
    <property type="entry name" value="LeuC_type1"/>
    <property type="match status" value="1"/>
</dbReference>
<dbReference type="InterPro" id="IPR004430">
    <property type="entry name" value="3-IsopropMal_deHydase_lsu"/>
</dbReference>
<dbReference type="InterPro" id="IPR015931">
    <property type="entry name" value="Acnase/IPM_dHydase_lsu_aba_1/3"/>
</dbReference>
<dbReference type="InterPro" id="IPR001030">
    <property type="entry name" value="Acoase/IPM_deHydtase_lsu_aba"/>
</dbReference>
<dbReference type="InterPro" id="IPR018136">
    <property type="entry name" value="Aconitase_4Fe-4S_BS"/>
</dbReference>
<dbReference type="InterPro" id="IPR036008">
    <property type="entry name" value="Aconitase_4Fe-4S_dom"/>
</dbReference>
<dbReference type="InterPro" id="IPR050067">
    <property type="entry name" value="IPM_dehydratase_rel_enz"/>
</dbReference>
<dbReference type="InterPro" id="IPR033941">
    <property type="entry name" value="IPMI_cat"/>
</dbReference>
<dbReference type="NCBIfam" id="TIGR00170">
    <property type="entry name" value="leuC"/>
    <property type="match status" value="1"/>
</dbReference>
<dbReference type="NCBIfam" id="NF004016">
    <property type="entry name" value="PRK05478.1"/>
    <property type="match status" value="1"/>
</dbReference>
<dbReference type="NCBIfam" id="NF009116">
    <property type="entry name" value="PRK12466.1"/>
    <property type="match status" value="1"/>
</dbReference>
<dbReference type="PANTHER" id="PTHR43822:SF9">
    <property type="entry name" value="3-ISOPROPYLMALATE DEHYDRATASE"/>
    <property type="match status" value="1"/>
</dbReference>
<dbReference type="PANTHER" id="PTHR43822">
    <property type="entry name" value="HOMOACONITASE, MITOCHONDRIAL-RELATED"/>
    <property type="match status" value="1"/>
</dbReference>
<dbReference type="Pfam" id="PF00330">
    <property type="entry name" value="Aconitase"/>
    <property type="match status" value="1"/>
</dbReference>
<dbReference type="PRINTS" id="PR00415">
    <property type="entry name" value="ACONITASE"/>
</dbReference>
<dbReference type="SUPFAM" id="SSF53732">
    <property type="entry name" value="Aconitase iron-sulfur domain"/>
    <property type="match status" value="1"/>
</dbReference>
<dbReference type="PROSITE" id="PS01244">
    <property type="entry name" value="ACONITASE_2"/>
    <property type="match status" value="1"/>
</dbReference>
<protein>
    <recommendedName>
        <fullName evidence="1">3-isopropylmalate dehydratase large subunit</fullName>
        <ecNumber evidence="1">4.2.1.33</ecNumber>
    </recommendedName>
    <alternativeName>
        <fullName evidence="1">Alpha-IPM isomerase</fullName>
        <shortName evidence="1">IPMI</shortName>
    </alternativeName>
    <alternativeName>
        <fullName evidence="1">Isopropylmalate isomerase</fullName>
    </alternativeName>
</protein>
<sequence length="474" mass="50950">MSAKTLYDKLWDSHVVREEEDGTALIYIDRQLLHEVTSPQAFEGLRLANRKPWRIDANLATPDHNVPTTAFNSVEDIVDPISRIQVQTLDANTKQFGITEFGIGDVRQGIVHVVGPEEGVTLPGMTLVCGDSHTATHGALGALAHGVGTSEVEHVLATQCLIQKKMKNMLVKVDGKLQPGVSPKDVVLAIIGQIGTAGGNGHAIEFGGQVFRDMSIEGRMTVCNMAIEAGARVGLVAVDEKTVEYVKGRPFAPKAEDWDAAVAAWQDLKSDDNAHFDKVVEMDGSKIEPQVSWGTSPEMVSDVNGKVPNPAHESDDVKAGGIRRALEYMGLEADMAITDIPVDYVFIGSCTNSRIEDFREAAAVLKGRKVASSVEQALVVPGSGLVKRQAEEEGLDKIFIEAGFEWRNPGCSMCLAMNADRLPSGKHCASTSNRNFEGRQGAGGRTHLVSPQMAAAAAVAGHFVDVRDMMKEAS</sequence>
<organism>
    <name type="scientific">Hydrogenovibrio crunogenus (strain DSM 25203 / XCL-2)</name>
    <name type="common">Thiomicrospira crunogena</name>
    <dbReference type="NCBI Taxonomy" id="317025"/>
    <lineage>
        <taxon>Bacteria</taxon>
        <taxon>Pseudomonadati</taxon>
        <taxon>Pseudomonadota</taxon>
        <taxon>Gammaproteobacteria</taxon>
        <taxon>Thiotrichales</taxon>
        <taxon>Piscirickettsiaceae</taxon>
        <taxon>Hydrogenovibrio</taxon>
    </lineage>
</organism>
<proteinExistence type="inferred from homology"/>